<name>RL7_MOUSE</name>
<gene>
    <name type="primary">Rpl7</name>
</gene>
<protein>
    <recommendedName>
        <fullName evidence="4">Large ribosomal subunit protein uL30</fullName>
    </recommendedName>
    <alternativeName>
        <fullName>60S ribosomal protein L7</fullName>
    </alternativeName>
</protein>
<keyword id="KW-0002">3D-structure</keyword>
<keyword id="KW-0007">Acetylation</keyword>
<keyword id="KW-0963">Cytoplasm</keyword>
<keyword id="KW-0597">Phosphoprotein</keyword>
<keyword id="KW-1185">Reference proteome</keyword>
<keyword id="KW-0677">Repeat</keyword>
<keyword id="KW-0687">Ribonucleoprotein</keyword>
<keyword id="KW-0689">Ribosomal protein</keyword>
<keyword id="KW-0694">RNA-binding</keyword>
<organism>
    <name type="scientific">Mus musculus</name>
    <name type="common">Mouse</name>
    <dbReference type="NCBI Taxonomy" id="10090"/>
    <lineage>
        <taxon>Eukaryota</taxon>
        <taxon>Metazoa</taxon>
        <taxon>Chordata</taxon>
        <taxon>Craniata</taxon>
        <taxon>Vertebrata</taxon>
        <taxon>Euteleostomi</taxon>
        <taxon>Mammalia</taxon>
        <taxon>Eutheria</taxon>
        <taxon>Euarchontoglires</taxon>
        <taxon>Glires</taxon>
        <taxon>Rodentia</taxon>
        <taxon>Myomorpha</taxon>
        <taxon>Muroidea</taxon>
        <taxon>Muridae</taxon>
        <taxon>Murinae</taxon>
        <taxon>Mus</taxon>
        <taxon>Mus</taxon>
    </lineage>
</organism>
<comment type="function">
    <text evidence="1 3">Component of the large ribosomal subunit (PubMed:36517592). The ribosome is a large ribonucleoprotein complex responsible for the synthesis of proteins in the cell (PubMed:36517592). Binds to G-rich structures in 28S rRNA and in mRNAs (By similarity). Plays a regulatory role in the translation apparatus; inhibits cell-free translation of mRNAs (By similarity).</text>
</comment>
<comment type="subunit">
    <text evidence="1 2 3">Component of the large ribosomal subunit (PubMed:36517592). Homodimer (By similarity). Interacts with DHX33 (PubMed:26100019).</text>
</comment>
<comment type="subcellular location">
    <subcellularLocation>
        <location evidence="3">Cytoplasm</location>
    </subcellularLocation>
</comment>
<comment type="similarity">
    <text evidence="4">Belongs to the universal ribosomal protein uL30 family.</text>
</comment>
<proteinExistence type="evidence at protein level"/>
<dbReference type="EMBL" id="M29015">
    <property type="protein sequence ID" value="AAA40069.1"/>
    <property type="molecule type" value="Genomic_DNA"/>
</dbReference>
<dbReference type="EMBL" id="M29016">
    <property type="protein sequence ID" value="AAA40070.1"/>
    <property type="molecule type" value="mRNA"/>
</dbReference>
<dbReference type="EMBL" id="M85235">
    <property type="protein sequence ID" value="AAA40064.1"/>
    <property type="molecule type" value="mRNA"/>
</dbReference>
<dbReference type="EMBL" id="BC025909">
    <property type="protein sequence ID" value="AAH25909.1"/>
    <property type="molecule type" value="mRNA"/>
</dbReference>
<dbReference type="EMBL" id="BC051261">
    <property type="protein sequence ID" value="AAH51261.1"/>
    <property type="molecule type" value="mRNA"/>
</dbReference>
<dbReference type="EMBL" id="X57960">
    <property type="protein sequence ID" value="CAA41028.1"/>
    <property type="molecule type" value="mRNA"/>
</dbReference>
<dbReference type="EMBL" id="X57961">
    <property type="protein sequence ID" value="CAA41029.1"/>
    <property type="molecule type" value="mRNA"/>
</dbReference>
<dbReference type="CCDS" id="CCDS14829.1"/>
<dbReference type="PIR" id="A37055">
    <property type="entry name" value="A37055"/>
</dbReference>
<dbReference type="RefSeq" id="NP_035421.2">
    <property type="nucleotide sequence ID" value="NM_011291.5"/>
</dbReference>
<dbReference type="PDB" id="6SWA">
    <property type="method" value="EM"/>
    <property type="resolution" value="3.10 A"/>
    <property type="chains" value="F=1-270"/>
</dbReference>
<dbReference type="PDB" id="7CPU">
    <property type="method" value="EM"/>
    <property type="resolution" value="2.82 A"/>
    <property type="chains" value="LF=1-270"/>
</dbReference>
<dbReference type="PDB" id="7CPV">
    <property type="method" value="EM"/>
    <property type="resolution" value="3.03 A"/>
    <property type="chains" value="LF=1-270"/>
</dbReference>
<dbReference type="PDB" id="7LS1">
    <property type="method" value="EM"/>
    <property type="resolution" value="3.30 A"/>
    <property type="chains" value="A1=1-270"/>
</dbReference>
<dbReference type="PDB" id="7LS2">
    <property type="method" value="EM"/>
    <property type="resolution" value="3.10 A"/>
    <property type="chains" value="A1=1-270"/>
</dbReference>
<dbReference type="PDBsum" id="6SWA"/>
<dbReference type="PDBsum" id="7CPU"/>
<dbReference type="PDBsum" id="7CPV"/>
<dbReference type="PDBsum" id="7LS1"/>
<dbReference type="PDBsum" id="7LS2"/>
<dbReference type="EMDB" id="EMD-10321"/>
<dbReference type="EMDB" id="EMD-23500"/>
<dbReference type="EMDB" id="EMD-23501"/>
<dbReference type="EMDB" id="EMD-30432"/>
<dbReference type="EMDB" id="EMD-30433"/>
<dbReference type="SMR" id="P14148"/>
<dbReference type="BioGRID" id="202988">
    <property type="interactions" value="99"/>
</dbReference>
<dbReference type="ComplexPortal" id="CPX-5262">
    <property type="entry name" value="60S cytosolic large ribosomal subunit"/>
</dbReference>
<dbReference type="ComplexPortal" id="CPX-7662">
    <property type="entry name" value="60S cytosolic large ribosomal subunit, testis-specific variant"/>
</dbReference>
<dbReference type="ComplexPortal" id="CPX-7663">
    <property type="entry name" value="60S cytosolic large ribosomal subunit, striated muscle variant"/>
</dbReference>
<dbReference type="CORUM" id="P14148"/>
<dbReference type="FunCoup" id="P14148">
    <property type="interactions" value="1818"/>
</dbReference>
<dbReference type="IntAct" id="P14148">
    <property type="interactions" value="7"/>
</dbReference>
<dbReference type="MINT" id="P14148"/>
<dbReference type="STRING" id="10090.ENSMUSP00000071616"/>
<dbReference type="GlyGen" id="P14148">
    <property type="glycosylation" value="1 site, 1 O-linked glycan (1 site)"/>
</dbReference>
<dbReference type="iPTMnet" id="P14148"/>
<dbReference type="PhosphoSitePlus" id="P14148"/>
<dbReference type="SwissPalm" id="P14148"/>
<dbReference type="jPOST" id="P14148"/>
<dbReference type="PaxDb" id="10090-ENSMUSP00000071616"/>
<dbReference type="PeptideAtlas" id="P14148"/>
<dbReference type="ProteomicsDB" id="299824"/>
<dbReference type="Pumba" id="P14148"/>
<dbReference type="TopDownProteomics" id="P14148"/>
<dbReference type="Antibodypedia" id="25169">
    <property type="antibodies" value="257 antibodies from 30 providers"/>
</dbReference>
<dbReference type="DNASU" id="19989"/>
<dbReference type="Ensembl" id="ENSMUST00000058437.14">
    <property type="protein sequence ID" value="ENSMUSP00000071616.7"/>
    <property type="gene ID" value="ENSMUSG00000043716.14"/>
</dbReference>
<dbReference type="GeneID" id="19989"/>
<dbReference type="KEGG" id="mmu:19989"/>
<dbReference type="UCSC" id="uc007ajl.3">
    <property type="organism name" value="mouse"/>
</dbReference>
<dbReference type="AGR" id="MGI:98073"/>
<dbReference type="CTD" id="6129"/>
<dbReference type="MGI" id="MGI:98073">
    <property type="gene designation" value="Rpl7"/>
</dbReference>
<dbReference type="VEuPathDB" id="HostDB:ENSMUSG00000043716"/>
<dbReference type="eggNOG" id="KOG3184">
    <property type="taxonomic scope" value="Eukaryota"/>
</dbReference>
<dbReference type="GeneTree" id="ENSGT00950000182878"/>
<dbReference type="HOGENOM" id="CLU_055156_0_2_1"/>
<dbReference type="InParanoid" id="P14148"/>
<dbReference type="OMA" id="IVEPWIA"/>
<dbReference type="OrthoDB" id="55781at9989"/>
<dbReference type="PhylomeDB" id="P14148"/>
<dbReference type="TreeFam" id="TF300740"/>
<dbReference type="Reactome" id="R-MMU-156827">
    <property type="pathway name" value="L13a-mediated translational silencing of Ceruloplasmin expression"/>
</dbReference>
<dbReference type="Reactome" id="R-MMU-1799339">
    <property type="pathway name" value="SRP-dependent cotranslational protein targeting to membrane"/>
</dbReference>
<dbReference type="Reactome" id="R-MMU-6791226">
    <property type="pathway name" value="Major pathway of rRNA processing in the nucleolus and cytosol"/>
</dbReference>
<dbReference type="Reactome" id="R-MMU-72689">
    <property type="pathway name" value="Formation of a pool of free 40S subunits"/>
</dbReference>
<dbReference type="Reactome" id="R-MMU-72706">
    <property type="pathway name" value="GTP hydrolysis and joining of the 60S ribosomal subunit"/>
</dbReference>
<dbReference type="Reactome" id="R-MMU-975956">
    <property type="pathway name" value="Nonsense Mediated Decay (NMD) independent of the Exon Junction Complex (EJC)"/>
</dbReference>
<dbReference type="Reactome" id="R-MMU-975957">
    <property type="pathway name" value="Nonsense Mediated Decay (NMD) enhanced by the Exon Junction Complex (EJC)"/>
</dbReference>
<dbReference type="BioGRID-ORCS" id="19989">
    <property type="hits" value="26 hits in 71 CRISPR screens"/>
</dbReference>
<dbReference type="ChiTaRS" id="Rpl7">
    <property type="organism name" value="mouse"/>
</dbReference>
<dbReference type="PRO" id="PR:P14148"/>
<dbReference type="Proteomes" id="UP000000589">
    <property type="component" value="Chromosome 1"/>
</dbReference>
<dbReference type="RNAct" id="P14148">
    <property type="molecule type" value="protein"/>
</dbReference>
<dbReference type="Bgee" id="ENSMUSG00000043716">
    <property type="expression patterns" value="Expressed in epiblast (generic) and 67 other cell types or tissues"/>
</dbReference>
<dbReference type="ExpressionAtlas" id="P14148">
    <property type="expression patterns" value="baseline and differential"/>
</dbReference>
<dbReference type="GO" id="GO:0005737">
    <property type="term" value="C:cytoplasm"/>
    <property type="evidence" value="ECO:0000314"/>
    <property type="project" value="ComplexPortal"/>
</dbReference>
<dbReference type="GO" id="GO:0005829">
    <property type="term" value="C:cytosol"/>
    <property type="evidence" value="ECO:0000304"/>
    <property type="project" value="Reactome"/>
</dbReference>
<dbReference type="GO" id="GO:0022625">
    <property type="term" value="C:cytosolic large ribosomal subunit"/>
    <property type="evidence" value="ECO:0000314"/>
    <property type="project" value="UniProtKB"/>
</dbReference>
<dbReference type="GO" id="GO:0098794">
    <property type="term" value="C:postsynapse"/>
    <property type="evidence" value="ECO:0000303"/>
    <property type="project" value="SynGO"/>
</dbReference>
<dbReference type="GO" id="GO:0098793">
    <property type="term" value="C:presynapse"/>
    <property type="evidence" value="ECO:0000303"/>
    <property type="project" value="SynGO"/>
</dbReference>
<dbReference type="GO" id="GO:1990904">
    <property type="term" value="C:ribonucleoprotein complex"/>
    <property type="evidence" value="ECO:0000266"/>
    <property type="project" value="MGI"/>
</dbReference>
<dbReference type="GO" id="GO:0005840">
    <property type="term" value="C:ribosome"/>
    <property type="evidence" value="ECO:0000314"/>
    <property type="project" value="MGI"/>
</dbReference>
<dbReference type="GO" id="GO:0045202">
    <property type="term" value="C:synapse"/>
    <property type="evidence" value="ECO:0000314"/>
    <property type="project" value="SynGO"/>
</dbReference>
<dbReference type="GO" id="GO:0003677">
    <property type="term" value="F:DNA binding"/>
    <property type="evidence" value="ECO:0000266"/>
    <property type="project" value="MGI"/>
</dbReference>
<dbReference type="GO" id="GO:0042802">
    <property type="term" value="F:identical protein binding"/>
    <property type="evidence" value="ECO:0000266"/>
    <property type="project" value="MGI"/>
</dbReference>
<dbReference type="GO" id="GO:0003729">
    <property type="term" value="F:mRNA binding"/>
    <property type="evidence" value="ECO:0000266"/>
    <property type="project" value="MGI"/>
</dbReference>
<dbReference type="GO" id="GO:0003735">
    <property type="term" value="F:structural constituent of ribosome"/>
    <property type="evidence" value="ECO:0000314"/>
    <property type="project" value="UniProtKB"/>
</dbReference>
<dbReference type="GO" id="GO:0002181">
    <property type="term" value="P:cytoplasmic translation"/>
    <property type="evidence" value="ECO:0000303"/>
    <property type="project" value="ComplexPortal"/>
</dbReference>
<dbReference type="GO" id="GO:0000463">
    <property type="term" value="P:maturation of LSU-rRNA from tricistronic rRNA transcript (SSU-rRNA, 5.8S rRNA, LSU-rRNA)"/>
    <property type="evidence" value="ECO:0007669"/>
    <property type="project" value="InterPro"/>
</dbReference>
<dbReference type="GO" id="GO:0006412">
    <property type="term" value="P:translation"/>
    <property type="evidence" value="ECO:0000305"/>
    <property type="project" value="MGI"/>
</dbReference>
<dbReference type="GO" id="GO:0140242">
    <property type="term" value="P:translation at postsynapse"/>
    <property type="evidence" value="ECO:0000303"/>
    <property type="project" value="SynGO"/>
</dbReference>
<dbReference type="GO" id="GO:0140236">
    <property type="term" value="P:translation at presynapse"/>
    <property type="evidence" value="ECO:0000303"/>
    <property type="project" value="SynGO"/>
</dbReference>
<dbReference type="CDD" id="cd01657">
    <property type="entry name" value="Ribosomal_L7_archeal_euk"/>
    <property type="match status" value="1"/>
</dbReference>
<dbReference type="FunFam" id="1.10.15.30:FF:000001">
    <property type="entry name" value="60S ribosomal protein L7"/>
    <property type="match status" value="1"/>
</dbReference>
<dbReference type="FunFam" id="3.30.1390.20:FF:000002">
    <property type="entry name" value="60S ribosomal protein L7"/>
    <property type="match status" value="1"/>
</dbReference>
<dbReference type="FunFam" id="3.30.1390.20:FF:000003">
    <property type="entry name" value="60S ribosomal protein L7"/>
    <property type="match status" value="1"/>
</dbReference>
<dbReference type="Gene3D" id="1.10.15.30">
    <property type="match status" value="1"/>
</dbReference>
<dbReference type="Gene3D" id="3.30.1390.20">
    <property type="entry name" value="Ribosomal protein L30, ferredoxin-like fold domain"/>
    <property type="match status" value="1"/>
</dbReference>
<dbReference type="InterPro" id="IPR036919">
    <property type="entry name" value="Ribo_uL30_ferredoxin-like_sf"/>
</dbReference>
<dbReference type="InterPro" id="IPR039699">
    <property type="entry name" value="Ribosomal_uL30"/>
</dbReference>
<dbReference type="InterPro" id="IPR018038">
    <property type="entry name" value="Ribosomal_uL30_CS"/>
</dbReference>
<dbReference type="InterPro" id="IPR005998">
    <property type="entry name" value="Ribosomal_uL30_euk"/>
</dbReference>
<dbReference type="InterPro" id="IPR035808">
    <property type="entry name" value="Ribosomal_uL30_euk_arc"/>
</dbReference>
<dbReference type="InterPro" id="IPR016082">
    <property type="entry name" value="Ribosomal_uL30_ferredoxin-like"/>
</dbReference>
<dbReference type="InterPro" id="IPR012988">
    <property type="entry name" value="Ribosomal_uL30_N_euk"/>
</dbReference>
<dbReference type="NCBIfam" id="TIGR01310">
    <property type="entry name" value="uL30_euk"/>
    <property type="match status" value="1"/>
</dbReference>
<dbReference type="PANTHER" id="PTHR11524">
    <property type="entry name" value="60S RIBOSOMAL PROTEIN L7"/>
    <property type="match status" value="1"/>
</dbReference>
<dbReference type="PANTHER" id="PTHR11524:SF12">
    <property type="entry name" value="LARGE RIBOSOMAL SUBUNIT PROTEIN UL30"/>
    <property type="match status" value="1"/>
</dbReference>
<dbReference type="Pfam" id="PF00327">
    <property type="entry name" value="Ribosomal_L30"/>
    <property type="match status" value="1"/>
</dbReference>
<dbReference type="Pfam" id="PF08079">
    <property type="entry name" value="Ribosomal_L30_N"/>
    <property type="match status" value="1"/>
</dbReference>
<dbReference type="SUPFAM" id="SSF55129">
    <property type="entry name" value="Ribosomal protein L30p/L7e"/>
    <property type="match status" value="1"/>
</dbReference>
<dbReference type="PROSITE" id="PS00634">
    <property type="entry name" value="RIBOSOMAL_L30"/>
    <property type="match status" value="1"/>
</dbReference>
<sequence>MEAVPEKKKKVATVPGTLKKKVPAGPKTLKKKVPAVPETLKKKRRNFAELKVKRLRKKFALKTLRKARRKLIYEKAKHYHKEYRQMYRTEIRMARMARKAGNFYVPAEPKLAFVIRIRGINGVSPKVRKVLQLLRLRQIFNGTFVKLNKASINMLRIVEPYIAWGYPNLKSVNELIYKRGYGKINKKRIALTDNSLIARSLGKFGIICMEDLIHEIYTVGKRFKEANNFLWPFKLSSPRGGMKKKTTHFVEGGDAGNREDQINRLIRRMN</sequence>
<reference key="1">
    <citation type="journal article" date="1990" name="J. Biol. Chem.">
        <title>The mouse ribosomal protein L7 gene. Its primary structure and functional analysis of the promoter region.</title>
        <authorList>
            <person name="Meyuhas O."/>
            <person name="Klein A."/>
        </authorList>
    </citation>
    <scope>NUCLEOTIDE SEQUENCE [GENOMIC DNA / MRNA]</scope>
</reference>
<reference key="2">
    <citation type="submission" date="1992-02" db="EMBL/GenBank/DDBJ databases">
        <title>Immunochemical and structural similarity between a mouse cytochrome oxidase subunit and ribosomal protein L7.</title>
        <authorList>
            <person name="Zheng Y.-M."/>
            <person name="Su P."/>
            <person name="Wang J.X."/>
            <person name="Basu A."/>
            <person name="Bhat K."/>
            <person name="Carter R."/>
            <person name="Avadhani N.G."/>
        </authorList>
    </citation>
    <scope>NUCLEOTIDE SEQUENCE [MRNA]</scope>
    <source>
        <strain>SWR/J</strain>
    </source>
</reference>
<reference key="3">
    <citation type="journal article" date="2004" name="Genome Res.">
        <title>The status, quality, and expansion of the NIH full-length cDNA project: the Mammalian Gene Collection (MGC).</title>
        <authorList>
            <consortium name="The MGC Project Team"/>
        </authorList>
    </citation>
    <scope>NUCLEOTIDE SEQUENCE [LARGE SCALE MRNA]</scope>
    <source>
        <strain>C57BL/6J</strain>
        <tissue>Hematopoietic stem cell</tissue>
        <tissue>Mammary gland</tissue>
    </source>
</reference>
<reference key="4">
    <citation type="journal article" date="1993" name="Nucleic Acids Res.">
        <title>Structural and functional properties of ribosomal protein L7 from humans and rodents.</title>
        <authorList>
            <person name="Hemmerich P."/>
            <person name="von Mikecz A."/>
            <person name="Neumann F."/>
            <person name="Soezen O."/>
            <person name="Wolff-Vorbeck G."/>
            <person name="Zoebelein R."/>
            <person name="Krawinkel U."/>
        </authorList>
    </citation>
    <scope>NUCLEOTIDE SEQUENCE [MRNA] OF 117-270</scope>
</reference>
<reference key="5">
    <citation type="journal article" date="2010" name="Cell">
        <title>A tissue-specific atlas of mouse protein phosphorylation and expression.</title>
        <authorList>
            <person name="Huttlin E.L."/>
            <person name="Jedrychowski M.P."/>
            <person name="Elias J.E."/>
            <person name="Goswami T."/>
            <person name="Rad R."/>
            <person name="Beausoleil S.A."/>
            <person name="Villen J."/>
            <person name="Haas W."/>
            <person name="Sowa M.E."/>
            <person name="Gygi S.P."/>
        </authorList>
    </citation>
    <scope>IDENTIFICATION BY MASS SPECTROMETRY [LARGE SCALE ANALYSIS]</scope>
    <source>
        <tissue>Brain</tissue>
        <tissue>Brown adipose tissue</tissue>
        <tissue>Heart</tissue>
        <tissue>Kidney</tissue>
        <tissue>Liver</tissue>
        <tissue>Lung</tissue>
        <tissue>Pancreas</tissue>
        <tissue>Spleen</tissue>
        <tissue>Testis</tissue>
    </source>
</reference>
<reference key="6">
    <citation type="journal article" date="2013" name="Mol. Cell">
        <title>SIRT5-mediated lysine desuccinylation impacts diverse metabolic pathways.</title>
        <authorList>
            <person name="Park J."/>
            <person name="Chen Y."/>
            <person name="Tishkoff D.X."/>
            <person name="Peng C."/>
            <person name="Tan M."/>
            <person name="Dai L."/>
            <person name="Xie Z."/>
            <person name="Zhang Y."/>
            <person name="Zwaans B.M."/>
            <person name="Skinner M.E."/>
            <person name="Lombard D.B."/>
            <person name="Zhao Y."/>
        </authorList>
    </citation>
    <scope>SUCCINYLATION [LARGE SCALE ANALYSIS] AT LYS-149</scope>
    <scope>IDENTIFICATION BY MASS SPECTROMETRY [LARGE SCALE ANALYSIS]</scope>
    <source>
        <tissue>Embryonic fibroblast</tissue>
    </source>
</reference>
<reference key="7">
    <citation type="journal article" date="2015" name="Mol. Cell. Biol.">
        <title>The DHX33 RNA Helicase Promotes mRNA Translation Initiation.</title>
        <authorList>
            <person name="Zhang Y."/>
            <person name="You J."/>
            <person name="Wang X."/>
            <person name="Weber J."/>
        </authorList>
    </citation>
    <scope>INTERACTION WITH DHX33</scope>
</reference>
<reference evidence="5 6" key="8">
    <citation type="journal article" date="2022" name="Nature">
        <title>A male germ-cell-specific ribosome controls male fertility.</title>
        <authorList>
            <person name="Li H."/>
            <person name="Huo Y."/>
            <person name="He X."/>
            <person name="Yao L."/>
            <person name="Zhang H."/>
            <person name="Cui Y."/>
            <person name="Xiao H."/>
            <person name="Xie W."/>
            <person name="Zhang D."/>
            <person name="Wang Y."/>
            <person name="Zhang S."/>
            <person name="Tu H."/>
            <person name="Cheng Y."/>
            <person name="Guo Y."/>
            <person name="Cao X."/>
            <person name="Zhu Y."/>
            <person name="Jiang T."/>
            <person name="Guo X."/>
            <person name="Qin Y."/>
            <person name="Sha J."/>
        </authorList>
    </citation>
    <scope>STRUCTURE BY ELECTRON MICROSCOPY (3.03 ANGSTROMS) OF RIBOSOME</scope>
    <scope>FUNCTION</scope>
    <scope>SUBUNIT</scope>
    <scope>SUBCELLULAR LOCATION</scope>
</reference>
<accession>P14148</accession>
<accession>Q80UR0</accession>
<feature type="chain" id="PRO_0000104634" description="Large ribosomal subunit protein uL30">
    <location>
        <begin position="1"/>
        <end position="270"/>
    </location>
</feature>
<feature type="repeat" description="1">
    <location>
        <begin position="7"/>
        <end position="18"/>
    </location>
</feature>
<feature type="repeat" description="2">
    <location>
        <begin position="19"/>
        <end position="29"/>
    </location>
</feature>
<feature type="repeat" description="3">
    <location>
        <begin position="30"/>
        <end position="40"/>
    </location>
</feature>
<feature type="repeat" description="4">
    <location>
        <begin position="41"/>
        <end position="52"/>
    </location>
</feature>
<feature type="repeat" description="5">
    <location>
        <begin position="53"/>
        <end position="64"/>
    </location>
</feature>
<feature type="repeat" description="6">
    <location>
        <begin position="65"/>
        <end position="76"/>
    </location>
</feature>
<feature type="region of interest" description="6 X 12 AA tandem repeats">
    <location>
        <begin position="7"/>
        <end position="76"/>
    </location>
</feature>
<feature type="modified residue" description="N-acetylmethionine" evidence="1">
    <location>
        <position position="1"/>
    </location>
</feature>
<feature type="modified residue" description="Phosphothreonine" evidence="1">
    <location>
        <position position="39"/>
    </location>
</feature>
<feature type="modified residue" description="N6-acetyllysine" evidence="1">
    <location>
        <position position="146"/>
    </location>
</feature>
<feature type="modified residue" description="N6-succinyllysine" evidence="7">
    <location>
        <position position="149"/>
    </location>
</feature>
<feature type="modified residue" description="Phosphotyrosine" evidence="1">
    <location>
        <position position="161"/>
    </location>
</feature>
<feature type="sequence conflict" description="In Ref. 2; AAA40064." evidence="4" ref="2">
    <original>GPKTL</original>
    <variation>WAKNS</variation>
    <location>
        <begin position="25"/>
        <end position="29"/>
    </location>
</feature>
<feature type="sequence conflict" description="In Ref. 2; AAA40064." evidence="4" ref="2">
    <original>L</original>
    <variation>R</variation>
    <location>
        <position position="40"/>
    </location>
</feature>
<feature type="sequence conflict" description="In Ref. 2; AAA40064." evidence="4" ref="2">
    <original>L</original>
    <variation>V</variation>
    <location>
        <position position="64"/>
    </location>
</feature>
<feature type="sequence conflict" description="In Ref. 3; AAH51261." evidence="4" ref="3">
    <original>R</original>
    <variation>G</variation>
    <location>
        <position position="84"/>
    </location>
</feature>
<feature type="sequence conflict" description="In Ref. 1; AAA40069." evidence="4" ref="1">
    <original>R</original>
    <variation>Q</variation>
    <location>
        <position position="268"/>
    </location>
</feature>
<evidence type="ECO:0000250" key="1">
    <source>
        <dbReference type="UniProtKB" id="P18124"/>
    </source>
</evidence>
<evidence type="ECO:0000269" key="2">
    <source>
    </source>
</evidence>
<evidence type="ECO:0000269" key="3">
    <source>
    </source>
</evidence>
<evidence type="ECO:0000305" key="4"/>
<evidence type="ECO:0007744" key="5">
    <source>
        <dbReference type="PDB" id="7CPU"/>
    </source>
</evidence>
<evidence type="ECO:0007744" key="6">
    <source>
        <dbReference type="PDB" id="7CPV"/>
    </source>
</evidence>
<evidence type="ECO:0007744" key="7">
    <source>
    </source>
</evidence>